<name>KDSB_BURCH</name>
<evidence type="ECO:0000255" key="1">
    <source>
        <dbReference type="HAMAP-Rule" id="MF_00057"/>
    </source>
</evidence>
<reference key="1">
    <citation type="submission" date="2006-08" db="EMBL/GenBank/DDBJ databases">
        <title>Complete sequence of chromosome 1 of Burkholderia cenocepacia HI2424.</title>
        <authorList>
            <person name="Copeland A."/>
            <person name="Lucas S."/>
            <person name="Lapidus A."/>
            <person name="Barry K."/>
            <person name="Detter J.C."/>
            <person name="Glavina del Rio T."/>
            <person name="Hammon N."/>
            <person name="Israni S."/>
            <person name="Pitluck S."/>
            <person name="Chain P."/>
            <person name="Malfatti S."/>
            <person name="Shin M."/>
            <person name="Vergez L."/>
            <person name="Schmutz J."/>
            <person name="Larimer F."/>
            <person name="Land M."/>
            <person name="Hauser L."/>
            <person name="Kyrpides N."/>
            <person name="Kim E."/>
            <person name="LiPuma J.J."/>
            <person name="Gonzalez C.F."/>
            <person name="Konstantinidis K."/>
            <person name="Tiedje J.M."/>
            <person name="Richardson P."/>
        </authorList>
    </citation>
    <scope>NUCLEOTIDE SEQUENCE [LARGE SCALE GENOMIC DNA]</scope>
    <source>
        <strain>HI2424</strain>
    </source>
</reference>
<protein>
    <recommendedName>
        <fullName evidence="1">3-deoxy-manno-octulosonate cytidylyltransferase</fullName>
        <ecNumber evidence="1">2.7.7.38</ecNumber>
    </recommendedName>
    <alternativeName>
        <fullName evidence="1">CMP-2-keto-3-deoxyoctulosonic acid synthase</fullName>
        <shortName evidence="1">CKS</shortName>
        <shortName evidence="1">CMP-KDO synthase</shortName>
    </alternativeName>
</protein>
<accession>A0K9X0</accession>
<proteinExistence type="inferred from homology"/>
<dbReference type="EC" id="2.7.7.38" evidence="1"/>
<dbReference type="EMBL" id="CP000458">
    <property type="protein sequence ID" value="ABK09297.1"/>
    <property type="molecule type" value="Genomic_DNA"/>
</dbReference>
<dbReference type="RefSeq" id="WP_011546043.1">
    <property type="nucleotide sequence ID" value="NC_008542.1"/>
</dbReference>
<dbReference type="SMR" id="A0K9X0"/>
<dbReference type="KEGG" id="bch:Bcen2424_2547"/>
<dbReference type="HOGENOM" id="CLU_065038_1_0_4"/>
<dbReference type="UniPathway" id="UPA00030"/>
<dbReference type="UniPathway" id="UPA00358">
    <property type="reaction ID" value="UER00476"/>
</dbReference>
<dbReference type="GO" id="GO:0005829">
    <property type="term" value="C:cytosol"/>
    <property type="evidence" value="ECO:0007669"/>
    <property type="project" value="TreeGrafter"/>
</dbReference>
<dbReference type="GO" id="GO:0008690">
    <property type="term" value="F:3-deoxy-manno-octulosonate cytidylyltransferase activity"/>
    <property type="evidence" value="ECO:0007669"/>
    <property type="project" value="UniProtKB-UniRule"/>
</dbReference>
<dbReference type="GO" id="GO:0033468">
    <property type="term" value="P:CMP-keto-3-deoxy-D-manno-octulosonic acid biosynthetic process"/>
    <property type="evidence" value="ECO:0007669"/>
    <property type="project" value="UniProtKB-UniRule"/>
</dbReference>
<dbReference type="GO" id="GO:0009103">
    <property type="term" value="P:lipopolysaccharide biosynthetic process"/>
    <property type="evidence" value="ECO:0007669"/>
    <property type="project" value="UniProtKB-UniRule"/>
</dbReference>
<dbReference type="CDD" id="cd02517">
    <property type="entry name" value="CMP-KDO-Synthetase"/>
    <property type="match status" value="1"/>
</dbReference>
<dbReference type="FunFam" id="3.90.550.10:FF:000011">
    <property type="entry name" value="3-deoxy-manno-octulosonate cytidylyltransferase"/>
    <property type="match status" value="1"/>
</dbReference>
<dbReference type="Gene3D" id="3.90.550.10">
    <property type="entry name" value="Spore Coat Polysaccharide Biosynthesis Protein SpsA, Chain A"/>
    <property type="match status" value="1"/>
</dbReference>
<dbReference type="HAMAP" id="MF_00057">
    <property type="entry name" value="KdsB"/>
    <property type="match status" value="1"/>
</dbReference>
<dbReference type="InterPro" id="IPR003329">
    <property type="entry name" value="Cytidylyl_trans"/>
</dbReference>
<dbReference type="InterPro" id="IPR004528">
    <property type="entry name" value="KdsB"/>
</dbReference>
<dbReference type="InterPro" id="IPR029044">
    <property type="entry name" value="Nucleotide-diphossugar_trans"/>
</dbReference>
<dbReference type="NCBIfam" id="TIGR00466">
    <property type="entry name" value="kdsB"/>
    <property type="match status" value="1"/>
</dbReference>
<dbReference type="NCBIfam" id="NF003952">
    <property type="entry name" value="PRK05450.1-5"/>
    <property type="match status" value="1"/>
</dbReference>
<dbReference type="NCBIfam" id="NF009905">
    <property type="entry name" value="PRK13368.1"/>
    <property type="match status" value="1"/>
</dbReference>
<dbReference type="PANTHER" id="PTHR42866">
    <property type="entry name" value="3-DEOXY-MANNO-OCTULOSONATE CYTIDYLYLTRANSFERASE"/>
    <property type="match status" value="1"/>
</dbReference>
<dbReference type="PANTHER" id="PTHR42866:SF2">
    <property type="entry name" value="3-DEOXY-MANNO-OCTULOSONATE CYTIDYLYLTRANSFERASE, MITOCHONDRIAL"/>
    <property type="match status" value="1"/>
</dbReference>
<dbReference type="Pfam" id="PF02348">
    <property type="entry name" value="CTP_transf_3"/>
    <property type="match status" value="1"/>
</dbReference>
<dbReference type="SUPFAM" id="SSF53448">
    <property type="entry name" value="Nucleotide-diphospho-sugar transferases"/>
    <property type="match status" value="1"/>
</dbReference>
<feature type="chain" id="PRO_0000370024" description="3-deoxy-manno-octulosonate cytidylyltransferase">
    <location>
        <begin position="1"/>
        <end position="263"/>
    </location>
</feature>
<organism>
    <name type="scientific">Burkholderia cenocepacia (strain HI2424)</name>
    <dbReference type="NCBI Taxonomy" id="331272"/>
    <lineage>
        <taxon>Bacteria</taxon>
        <taxon>Pseudomonadati</taxon>
        <taxon>Pseudomonadota</taxon>
        <taxon>Betaproteobacteria</taxon>
        <taxon>Burkholderiales</taxon>
        <taxon>Burkholderiaceae</taxon>
        <taxon>Burkholderia</taxon>
        <taxon>Burkholderia cepacia complex</taxon>
    </lineage>
</organism>
<gene>
    <name evidence="1" type="primary">kdsB</name>
    <name type="ordered locus">Bcen2424_2547</name>
</gene>
<comment type="function">
    <text evidence="1">Activates KDO (a required 8-carbon sugar) for incorporation into bacterial lipopolysaccharide in Gram-negative bacteria.</text>
</comment>
<comment type="catalytic activity">
    <reaction evidence="1">
        <text>3-deoxy-alpha-D-manno-oct-2-ulosonate + CTP = CMP-3-deoxy-beta-D-manno-octulosonate + diphosphate</text>
        <dbReference type="Rhea" id="RHEA:23448"/>
        <dbReference type="ChEBI" id="CHEBI:33019"/>
        <dbReference type="ChEBI" id="CHEBI:37563"/>
        <dbReference type="ChEBI" id="CHEBI:85986"/>
        <dbReference type="ChEBI" id="CHEBI:85987"/>
        <dbReference type="EC" id="2.7.7.38"/>
    </reaction>
</comment>
<comment type="pathway">
    <text evidence="1">Nucleotide-sugar biosynthesis; CMP-3-deoxy-D-manno-octulosonate biosynthesis; CMP-3-deoxy-D-manno-octulosonate from 3-deoxy-D-manno-octulosonate and CTP: step 1/1.</text>
</comment>
<comment type="pathway">
    <text evidence="1">Bacterial outer membrane biogenesis; lipopolysaccharide biosynthesis.</text>
</comment>
<comment type="subcellular location">
    <subcellularLocation>
        <location evidence="1">Cytoplasm</location>
    </subcellularLocation>
</comment>
<comment type="similarity">
    <text evidence="1">Belongs to the KdsB family.</text>
</comment>
<keyword id="KW-0963">Cytoplasm</keyword>
<keyword id="KW-0448">Lipopolysaccharide biosynthesis</keyword>
<keyword id="KW-0548">Nucleotidyltransferase</keyword>
<keyword id="KW-0808">Transferase</keyword>
<sequence>MTHPPPFIAVIPARLASTRLPNKPLADLGGKPMVVRVAERAREAGAQQVLVASDAQSVLDAARDHGFEAVLTRADHPSGTDRLAEVAAAFGWRDDTVVVNVQGDEPLIDPVLVRDVASHLAAHPACAIATAAHPIHDAADVFNPNVVKVALDAQSVALYFSRAPIPWSRDAYQPHWPDVAAMPAPAFPVYRHIGLYAYRARFLRTYPSLAQAPIEQAEQLEQLRALWHGERIAVLITESAPEAGIDTPADLARVQALFQPGSK</sequence>